<comment type="function">
    <text evidence="5">Odorant receptor.</text>
</comment>
<comment type="subcellular location">
    <subcellularLocation>
        <location>Cell membrane</location>
        <topology>Multi-pass membrane protein</topology>
    </subcellularLocation>
</comment>
<comment type="similarity">
    <text evidence="2">Belongs to the G-protein coupled receptor 1 family.</text>
</comment>
<comment type="online information" name="Human Olfactory Receptor Data Exploratorium (HORDE)">
    <link uri="http://genome.weizmann.ac.il/horde/card/index/symbol:OR1Q1"/>
</comment>
<protein>
    <recommendedName>
        <fullName>Olfactory receptor 1Q1</fullName>
    </recommendedName>
    <alternativeName>
        <fullName>OST226</fullName>
    </alternativeName>
    <alternativeName>
        <fullName>Olfactory receptor 1Q2</fullName>
    </alternativeName>
    <alternativeName>
        <fullName>Olfactory receptor 1Q3</fullName>
    </alternativeName>
    <alternativeName>
        <fullName>Olfactory receptor 9-A</fullName>
        <shortName>OR9-A</shortName>
    </alternativeName>
    <alternativeName>
        <fullName>Olfactory receptor OR9-25</fullName>
    </alternativeName>
    <alternativeName>
        <fullName>Olfactory receptor TPCR106</fullName>
    </alternativeName>
</protein>
<reference key="1">
    <citation type="submission" date="2001-07" db="EMBL/GenBank/DDBJ databases">
        <title>Genome-wide discovery and analysis of human seven transmembrane helix receptor genes.</title>
        <authorList>
            <person name="Suwa M."/>
            <person name="Sato T."/>
            <person name="Okouchi I."/>
            <person name="Arita M."/>
            <person name="Futami K."/>
            <person name="Matsumoto S."/>
            <person name="Tsutsumi S."/>
            <person name="Aburatani H."/>
            <person name="Asai K."/>
            <person name="Akiyama Y."/>
        </authorList>
    </citation>
    <scope>NUCLEOTIDE SEQUENCE [GENOMIC DNA]</scope>
</reference>
<reference key="2">
    <citation type="journal article" date="2004" name="Nature">
        <title>DNA sequence and analysis of human chromosome 9.</title>
        <authorList>
            <person name="Humphray S.J."/>
            <person name="Oliver K."/>
            <person name="Hunt A.R."/>
            <person name="Plumb R.W."/>
            <person name="Loveland J.E."/>
            <person name="Howe K.L."/>
            <person name="Andrews T.D."/>
            <person name="Searle S."/>
            <person name="Hunt S.E."/>
            <person name="Scott C.E."/>
            <person name="Jones M.C."/>
            <person name="Ainscough R."/>
            <person name="Almeida J.P."/>
            <person name="Ambrose K.D."/>
            <person name="Ashwell R.I.S."/>
            <person name="Babbage A.K."/>
            <person name="Babbage S."/>
            <person name="Bagguley C.L."/>
            <person name="Bailey J."/>
            <person name="Banerjee R."/>
            <person name="Barker D.J."/>
            <person name="Barlow K.F."/>
            <person name="Bates K."/>
            <person name="Beasley H."/>
            <person name="Beasley O."/>
            <person name="Bird C.P."/>
            <person name="Bray-Allen S."/>
            <person name="Brown A.J."/>
            <person name="Brown J.Y."/>
            <person name="Burford D."/>
            <person name="Burrill W."/>
            <person name="Burton J."/>
            <person name="Carder C."/>
            <person name="Carter N.P."/>
            <person name="Chapman J.C."/>
            <person name="Chen Y."/>
            <person name="Clarke G."/>
            <person name="Clark S.Y."/>
            <person name="Clee C.M."/>
            <person name="Clegg S."/>
            <person name="Collier R.E."/>
            <person name="Corby N."/>
            <person name="Crosier M."/>
            <person name="Cummings A.T."/>
            <person name="Davies J."/>
            <person name="Dhami P."/>
            <person name="Dunn M."/>
            <person name="Dutta I."/>
            <person name="Dyer L.W."/>
            <person name="Earthrowl M.E."/>
            <person name="Faulkner L."/>
            <person name="Fleming C.J."/>
            <person name="Frankish A."/>
            <person name="Frankland J.A."/>
            <person name="French L."/>
            <person name="Fricker D.G."/>
            <person name="Garner P."/>
            <person name="Garnett J."/>
            <person name="Ghori J."/>
            <person name="Gilbert J.G.R."/>
            <person name="Glison C."/>
            <person name="Grafham D.V."/>
            <person name="Gribble S."/>
            <person name="Griffiths C."/>
            <person name="Griffiths-Jones S."/>
            <person name="Grocock R."/>
            <person name="Guy J."/>
            <person name="Hall R.E."/>
            <person name="Hammond S."/>
            <person name="Harley J.L."/>
            <person name="Harrison E.S.I."/>
            <person name="Hart E.A."/>
            <person name="Heath P.D."/>
            <person name="Henderson C.D."/>
            <person name="Hopkins B.L."/>
            <person name="Howard P.J."/>
            <person name="Howden P.J."/>
            <person name="Huckle E."/>
            <person name="Johnson C."/>
            <person name="Johnson D."/>
            <person name="Joy A.A."/>
            <person name="Kay M."/>
            <person name="Keenan S."/>
            <person name="Kershaw J.K."/>
            <person name="Kimberley A.M."/>
            <person name="King A."/>
            <person name="Knights A."/>
            <person name="Laird G.K."/>
            <person name="Langford C."/>
            <person name="Lawlor S."/>
            <person name="Leongamornlert D.A."/>
            <person name="Leversha M."/>
            <person name="Lloyd C."/>
            <person name="Lloyd D.M."/>
            <person name="Lovell J."/>
            <person name="Martin S."/>
            <person name="Mashreghi-Mohammadi M."/>
            <person name="Matthews L."/>
            <person name="McLaren S."/>
            <person name="McLay K.E."/>
            <person name="McMurray A."/>
            <person name="Milne S."/>
            <person name="Nickerson T."/>
            <person name="Nisbett J."/>
            <person name="Nordsiek G."/>
            <person name="Pearce A.V."/>
            <person name="Peck A.I."/>
            <person name="Porter K.M."/>
            <person name="Pandian R."/>
            <person name="Pelan S."/>
            <person name="Phillimore B."/>
            <person name="Povey S."/>
            <person name="Ramsey Y."/>
            <person name="Rand V."/>
            <person name="Scharfe M."/>
            <person name="Sehra H.K."/>
            <person name="Shownkeen R."/>
            <person name="Sims S.K."/>
            <person name="Skuce C.D."/>
            <person name="Smith M."/>
            <person name="Steward C.A."/>
            <person name="Swarbreck D."/>
            <person name="Sycamore N."/>
            <person name="Tester J."/>
            <person name="Thorpe A."/>
            <person name="Tracey A."/>
            <person name="Tromans A."/>
            <person name="Thomas D.W."/>
            <person name="Wall M."/>
            <person name="Wallis J.M."/>
            <person name="West A.P."/>
            <person name="Whitehead S.L."/>
            <person name="Willey D.L."/>
            <person name="Williams S.A."/>
            <person name="Wilming L."/>
            <person name="Wray P.W."/>
            <person name="Young L."/>
            <person name="Ashurst J.L."/>
            <person name="Coulson A."/>
            <person name="Blocker H."/>
            <person name="Durbin R.M."/>
            <person name="Sulston J.E."/>
            <person name="Hubbard T."/>
            <person name="Jackson M.J."/>
            <person name="Bentley D.R."/>
            <person name="Beck S."/>
            <person name="Rogers J."/>
            <person name="Dunham I."/>
        </authorList>
    </citation>
    <scope>NUCLEOTIDE SEQUENCE [LARGE SCALE GENOMIC DNA]</scope>
</reference>
<reference key="3">
    <citation type="journal article" date="2002" name="Genomics">
        <title>DEFOG: a practical scheme for deciphering families of genes.</title>
        <authorList>
            <person name="Fuchs T."/>
            <person name="Malecova B."/>
            <person name="Linhart C."/>
            <person name="Sharan R."/>
            <person name="Khen M."/>
            <person name="Herwig R."/>
            <person name="Shmulevich D."/>
            <person name="Elkon R."/>
            <person name="Steinfath M."/>
            <person name="O'Brien J.K."/>
            <person name="Radelof U."/>
            <person name="Lehrach H."/>
            <person name="Lancet D."/>
            <person name="Shamir R."/>
        </authorList>
    </citation>
    <scope>NUCLEOTIDE SEQUENCE [GENOMIC DNA] OF 68-283</scope>
    <scope>VARIANT MET-163</scope>
</reference>
<reference key="4">
    <citation type="journal article" date="1997" name="Genomics">
        <title>Specific repertoire of olfactory receptor genes in the male germ cells of several mammalian species.</title>
        <authorList>
            <person name="Vanderhaeghen P."/>
            <person name="Schurmans S."/>
            <person name="Vassart G."/>
            <person name="Parmentier M."/>
        </authorList>
    </citation>
    <scope>NUCLEOTIDE SEQUENCE [MRNA] OF 126-282</scope>
    <scope>VARIANT MET-163</scope>
    <source>
        <tissue>Testis</tissue>
    </source>
</reference>
<reference key="5">
    <citation type="journal article" date="2004" name="Proc. Natl. Acad. Sci. U.S.A.">
        <title>The human olfactory receptor gene family.</title>
        <authorList>
            <person name="Malnic B."/>
            <person name="Godfrey P.A."/>
            <person name="Buck L.B."/>
        </authorList>
    </citation>
    <scope>IDENTIFICATION</scope>
</reference>
<reference key="6">
    <citation type="journal article" date="2004" name="Proc. Natl. Acad. Sci. U.S.A.">
        <authorList>
            <person name="Malnic B."/>
            <person name="Godfrey P.A."/>
            <person name="Buck L.B."/>
        </authorList>
    </citation>
    <scope>ERRATUM OF PUBMED:14983052</scope>
</reference>
<gene>
    <name type="primary">OR1Q1</name>
    <name type="synonym">OR1Q2</name>
    <name type="synonym">OR1Q3</name>
</gene>
<accession>Q15612</accession>
<accession>Q6IFN4</accession>
<accession>Q8NGR7</accession>
<accession>Q96R82</accession>
<keyword id="KW-1003">Cell membrane</keyword>
<keyword id="KW-1015">Disulfide bond</keyword>
<keyword id="KW-0297">G-protein coupled receptor</keyword>
<keyword id="KW-0325">Glycoprotein</keyword>
<keyword id="KW-0472">Membrane</keyword>
<keyword id="KW-0552">Olfaction</keyword>
<keyword id="KW-0675">Receptor</keyword>
<keyword id="KW-1185">Reference proteome</keyword>
<keyword id="KW-0716">Sensory transduction</keyword>
<keyword id="KW-0807">Transducer</keyword>
<keyword id="KW-0812">Transmembrane</keyword>
<keyword id="KW-1133">Transmembrane helix</keyword>
<sequence>MDNSNWTSVSHFVLLGISTHPEEQIPLFLVFSLMYAINISGNLAIITLILSAPRLHIPMYIFLSNLALTDICFTSTTVPKMLQIIFSPTKVISYTGCLAQTYFFICFAVMENFILAVMAYDRYIAICHPFHYTMILTRMLCVKMVVMCHALSHLHAMLHTFLIGQLIFCADNRIPHFFCDLYALMKISCTSTYLNTLMIHTEGAVVISGALAFITASYACIILVVLRIPSAKGRWKTFSTCGSHLTVVAIFYGTLSWVYFRPLSSYSVTKGRIITVVYTVVTPMLNPFIYSLRNGDVKGGFMKWMSRMQTFFFR</sequence>
<evidence type="ECO:0000255" key="1"/>
<evidence type="ECO:0000255" key="2">
    <source>
        <dbReference type="PROSITE-ProRule" id="PRU00521"/>
    </source>
</evidence>
<evidence type="ECO:0000269" key="3">
    <source>
    </source>
</evidence>
<evidence type="ECO:0000269" key="4">
    <source>
    </source>
</evidence>
<evidence type="ECO:0000305" key="5"/>
<organism>
    <name type="scientific">Homo sapiens</name>
    <name type="common">Human</name>
    <dbReference type="NCBI Taxonomy" id="9606"/>
    <lineage>
        <taxon>Eukaryota</taxon>
        <taxon>Metazoa</taxon>
        <taxon>Chordata</taxon>
        <taxon>Craniata</taxon>
        <taxon>Vertebrata</taxon>
        <taxon>Euteleostomi</taxon>
        <taxon>Mammalia</taxon>
        <taxon>Eutheria</taxon>
        <taxon>Euarchontoglires</taxon>
        <taxon>Primates</taxon>
        <taxon>Haplorrhini</taxon>
        <taxon>Catarrhini</taxon>
        <taxon>Hominidae</taxon>
        <taxon>Homo</taxon>
    </lineage>
</organism>
<dbReference type="EMBL" id="AB065722">
    <property type="protein sequence ID" value="BAC05943.1"/>
    <property type="molecule type" value="Genomic_DNA"/>
</dbReference>
<dbReference type="EMBL" id="AL162254">
    <property type="status" value="NOT_ANNOTATED_CDS"/>
    <property type="molecule type" value="Genomic_DNA"/>
</dbReference>
<dbReference type="EMBL" id="AF399561">
    <property type="protein sequence ID" value="AAK95046.1"/>
    <property type="molecule type" value="Genomic_DNA"/>
</dbReference>
<dbReference type="EMBL" id="X89667">
    <property type="protein sequence ID" value="CAA61814.1"/>
    <property type="molecule type" value="mRNA"/>
</dbReference>
<dbReference type="EMBL" id="BK004228">
    <property type="protein sequence ID" value="DAA04626.1"/>
    <property type="molecule type" value="Genomic_DNA"/>
</dbReference>
<dbReference type="CCDS" id="CCDS35125.1"/>
<dbReference type="PIR" id="S58012">
    <property type="entry name" value="S58012"/>
</dbReference>
<dbReference type="RefSeq" id="NP_036496.1">
    <property type="nucleotide sequence ID" value="NM_012364.1"/>
</dbReference>
<dbReference type="SMR" id="Q15612"/>
<dbReference type="FunCoup" id="Q15612">
    <property type="interactions" value="438"/>
</dbReference>
<dbReference type="STRING" id="9606.ENSP00000297913"/>
<dbReference type="GlyCosmos" id="Q15612">
    <property type="glycosylation" value="1 site, No reported glycans"/>
</dbReference>
<dbReference type="GlyGen" id="Q15612">
    <property type="glycosylation" value="1 site"/>
</dbReference>
<dbReference type="iPTMnet" id="Q15612"/>
<dbReference type="PhosphoSitePlus" id="Q15612"/>
<dbReference type="BioMuta" id="OR1Q1"/>
<dbReference type="DMDM" id="85681882"/>
<dbReference type="MassIVE" id="Q15612"/>
<dbReference type="PaxDb" id="9606-ENSP00000297913"/>
<dbReference type="Antibodypedia" id="30322">
    <property type="antibodies" value="67 antibodies from 16 providers"/>
</dbReference>
<dbReference type="DNASU" id="158131"/>
<dbReference type="Ensembl" id="ENST00000297913.3">
    <property type="protein sequence ID" value="ENSP00000297913.2"/>
    <property type="gene ID" value="ENSG00000165202.3"/>
</dbReference>
<dbReference type="GeneID" id="158131"/>
<dbReference type="KEGG" id="hsa:158131"/>
<dbReference type="MANE-Select" id="ENST00000297913.3">
    <property type="protein sequence ID" value="ENSP00000297913.2"/>
    <property type="RefSeq nucleotide sequence ID" value="NM_012364.1"/>
    <property type="RefSeq protein sequence ID" value="NP_036496.1"/>
</dbReference>
<dbReference type="UCSC" id="uc011lyy.2">
    <property type="organism name" value="human"/>
</dbReference>
<dbReference type="AGR" id="HGNC:8223"/>
<dbReference type="CTD" id="158131"/>
<dbReference type="DisGeNET" id="158131"/>
<dbReference type="GeneCards" id="OR1Q1"/>
<dbReference type="HGNC" id="HGNC:8223">
    <property type="gene designation" value="OR1Q1"/>
</dbReference>
<dbReference type="HPA" id="ENSG00000165202">
    <property type="expression patterns" value="Tissue enhanced (retina)"/>
</dbReference>
<dbReference type="neXtProt" id="NX_Q15612"/>
<dbReference type="PharmGKB" id="PA32094"/>
<dbReference type="VEuPathDB" id="HostDB:ENSG00000165202"/>
<dbReference type="eggNOG" id="ENOG502T9KC">
    <property type="taxonomic scope" value="Eukaryota"/>
</dbReference>
<dbReference type="GeneTree" id="ENSGT00940000163649"/>
<dbReference type="HOGENOM" id="CLU_012526_5_5_1"/>
<dbReference type="InParanoid" id="Q15612"/>
<dbReference type="OMA" id="YMGCLAQ"/>
<dbReference type="OrthoDB" id="9444602at2759"/>
<dbReference type="PAN-GO" id="Q15612">
    <property type="GO annotations" value="3 GO annotations based on evolutionary models"/>
</dbReference>
<dbReference type="PhylomeDB" id="Q15612"/>
<dbReference type="TreeFam" id="TF337210"/>
<dbReference type="PathwayCommons" id="Q15612"/>
<dbReference type="Reactome" id="R-HSA-9752946">
    <property type="pathway name" value="Expression and translocation of olfactory receptors"/>
</dbReference>
<dbReference type="BioGRID-ORCS" id="158131">
    <property type="hits" value="7 hits in 733 CRISPR screens"/>
</dbReference>
<dbReference type="GeneWiki" id="OR1Q1"/>
<dbReference type="GenomeRNAi" id="158131"/>
<dbReference type="Pharos" id="Q15612">
    <property type="development level" value="Tdark"/>
</dbReference>
<dbReference type="PRO" id="PR:Q15612"/>
<dbReference type="Proteomes" id="UP000005640">
    <property type="component" value="Chromosome 9"/>
</dbReference>
<dbReference type="RNAct" id="Q15612">
    <property type="molecule type" value="protein"/>
</dbReference>
<dbReference type="Bgee" id="ENSG00000165202">
    <property type="expression patterns" value="Expressed in male germ line stem cell (sensu Vertebrata) in testis and 16 other cell types or tissues"/>
</dbReference>
<dbReference type="GO" id="GO:0016020">
    <property type="term" value="C:membrane"/>
    <property type="evidence" value="ECO:0000303"/>
    <property type="project" value="UniProtKB"/>
</dbReference>
<dbReference type="GO" id="GO:0005886">
    <property type="term" value="C:plasma membrane"/>
    <property type="evidence" value="ECO:0000318"/>
    <property type="project" value="GO_Central"/>
</dbReference>
<dbReference type="GO" id="GO:0004930">
    <property type="term" value="F:G protein-coupled receptor activity"/>
    <property type="evidence" value="ECO:0007669"/>
    <property type="project" value="UniProtKB-KW"/>
</dbReference>
<dbReference type="GO" id="GO:0004984">
    <property type="term" value="F:olfactory receptor activity"/>
    <property type="evidence" value="ECO:0000318"/>
    <property type="project" value="GO_Central"/>
</dbReference>
<dbReference type="GO" id="GO:0007608">
    <property type="term" value="P:sensory perception of smell"/>
    <property type="evidence" value="ECO:0000303"/>
    <property type="project" value="UniProtKB"/>
</dbReference>
<dbReference type="GO" id="GO:0007165">
    <property type="term" value="P:signal transduction"/>
    <property type="evidence" value="ECO:0000318"/>
    <property type="project" value="GO_Central"/>
</dbReference>
<dbReference type="CDD" id="cd15235">
    <property type="entry name" value="7tmA_OR1A-like"/>
    <property type="match status" value="1"/>
</dbReference>
<dbReference type="FunFam" id="1.20.1070.10:FF:000082">
    <property type="entry name" value="Olfactory receptor 1A1"/>
    <property type="match status" value="1"/>
</dbReference>
<dbReference type="Gene3D" id="1.20.1070.10">
    <property type="entry name" value="Rhodopsin 7-helix transmembrane proteins"/>
    <property type="match status" value="1"/>
</dbReference>
<dbReference type="InterPro" id="IPR000276">
    <property type="entry name" value="GPCR_Rhodpsn"/>
</dbReference>
<dbReference type="InterPro" id="IPR017452">
    <property type="entry name" value="GPCR_Rhodpsn_7TM"/>
</dbReference>
<dbReference type="InterPro" id="IPR000725">
    <property type="entry name" value="Olfact_rcpt"/>
</dbReference>
<dbReference type="PANTHER" id="PTHR48001">
    <property type="entry name" value="OLFACTORY RECEPTOR"/>
    <property type="match status" value="1"/>
</dbReference>
<dbReference type="Pfam" id="PF13853">
    <property type="entry name" value="7tm_4"/>
    <property type="match status" value="1"/>
</dbReference>
<dbReference type="PRINTS" id="PR00237">
    <property type="entry name" value="GPCRRHODOPSN"/>
</dbReference>
<dbReference type="PRINTS" id="PR00245">
    <property type="entry name" value="OLFACTORYR"/>
</dbReference>
<dbReference type="SUPFAM" id="SSF81321">
    <property type="entry name" value="Family A G protein-coupled receptor-like"/>
    <property type="match status" value="1"/>
</dbReference>
<dbReference type="PROSITE" id="PS00237">
    <property type="entry name" value="G_PROTEIN_RECEP_F1_1"/>
    <property type="match status" value="1"/>
</dbReference>
<dbReference type="PROSITE" id="PS50262">
    <property type="entry name" value="G_PROTEIN_RECEP_F1_2"/>
    <property type="match status" value="1"/>
</dbReference>
<proteinExistence type="evidence at transcript level"/>
<feature type="chain" id="PRO_0000150450" description="Olfactory receptor 1Q1">
    <location>
        <begin position="1"/>
        <end position="314"/>
    </location>
</feature>
<feature type="topological domain" description="Extracellular" evidence="1">
    <location>
        <begin position="1"/>
        <end position="25"/>
    </location>
</feature>
<feature type="transmembrane region" description="Helical; Name=1" evidence="1">
    <location>
        <begin position="26"/>
        <end position="49"/>
    </location>
</feature>
<feature type="topological domain" description="Cytoplasmic" evidence="1">
    <location>
        <begin position="50"/>
        <end position="57"/>
    </location>
</feature>
<feature type="transmembrane region" description="Helical; Name=2" evidence="1">
    <location>
        <begin position="58"/>
        <end position="79"/>
    </location>
</feature>
<feature type="topological domain" description="Extracellular" evidence="1">
    <location>
        <begin position="80"/>
        <end position="100"/>
    </location>
</feature>
<feature type="transmembrane region" description="Helical; Name=3" evidence="1">
    <location>
        <begin position="101"/>
        <end position="120"/>
    </location>
</feature>
<feature type="topological domain" description="Cytoplasmic" evidence="1">
    <location>
        <begin position="121"/>
        <end position="139"/>
    </location>
</feature>
<feature type="transmembrane region" description="Helical; Name=4" evidence="1">
    <location>
        <begin position="140"/>
        <end position="158"/>
    </location>
</feature>
<feature type="topological domain" description="Extracellular" evidence="1">
    <location>
        <begin position="159"/>
        <end position="195"/>
    </location>
</feature>
<feature type="transmembrane region" description="Helical; Name=5" evidence="1">
    <location>
        <begin position="196"/>
        <end position="219"/>
    </location>
</feature>
<feature type="topological domain" description="Cytoplasmic" evidence="1">
    <location>
        <begin position="220"/>
        <end position="236"/>
    </location>
</feature>
<feature type="transmembrane region" description="Helical; Name=6" evidence="1">
    <location>
        <begin position="237"/>
        <end position="259"/>
    </location>
</feature>
<feature type="topological domain" description="Extracellular" evidence="1">
    <location>
        <begin position="260"/>
        <end position="272"/>
    </location>
</feature>
<feature type="transmembrane region" description="Helical; Name=7" evidence="1">
    <location>
        <begin position="273"/>
        <end position="292"/>
    </location>
</feature>
<feature type="topological domain" description="Cytoplasmic" evidence="1">
    <location>
        <begin position="293"/>
        <end position="314"/>
    </location>
</feature>
<feature type="glycosylation site" description="N-linked (GlcNAc...) asparagine" evidence="1">
    <location>
        <position position="5"/>
    </location>
</feature>
<feature type="disulfide bond" evidence="2">
    <location>
        <begin position="97"/>
        <end position="189"/>
    </location>
</feature>
<feature type="sequence variant" id="VAR_053126" description="In dbSNP:rs972925.">
    <original>Q</original>
    <variation>R</variation>
    <location>
        <position position="24"/>
    </location>
</feature>
<feature type="sequence variant" id="VAR_024768" description="In dbSNP:rs1329957." evidence="3 4">
    <original>I</original>
    <variation>M</variation>
    <location>
        <position position="163"/>
    </location>
</feature>
<feature type="sequence variant" id="VAR_053127" description="In dbSNP:rs727913.">
    <original>T</original>
    <variation>A</variation>
    <location>
        <position position="240"/>
    </location>
</feature>
<feature type="sequence conflict" description="In Ref. 4; CAA61814." evidence="5" ref="4">
    <original>I</original>
    <variation>F</variation>
    <location>
        <position position="126"/>
    </location>
</feature>
<name>OR1Q1_HUMAN</name>